<reference key="1">
    <citation type="journal article" date="1996" name="Gene">
        <title>The yeast SME1 gene encodes the homologue of the human E core protein.</title>
        <authorList>
            <person name="Bordonne R."/>
            <person name="Tarassov I.A."/>
        </authorList>
    </citation>
    <scope>NUCLEOTIDE SEQUENCE [GENOMIC DNA]</scope>
    <scope>FUNCTION</scope>
    <source>
        <strain>ATCC 204508 / S288c</strain>
    </source>
</reference>
<reference key="2">
    <citation type="journal article" date="1997" name="Yeast">
        <title>Analysis of a 35.6 kb region on the right arm of Saccharomyces cerevisiae chromosome XV.</title>
        <authorList>
            <person name="Bordonne R."/>
            <person name="Camasses A."/>
            <person name="Madania A."/>
            <person name="Poch O."/>
            <person name="Tarassov I.A."/>
            <person name="Winsor B."/>
            <person name="Martin R.P."/>
        </authorList>
    </citation>
    <scope>NUCLEOTIDE SEQUENCE [GENOMIC DNA]</scope>
    <source>
        <strain>S288c / FY1678</strain>
    </source>
</reference>
<reference key="3">
    <citation type="journal article" date="1997" name="Nature">
        <title>The nucleotide sequence of Saccharomyces cerevisiae chromosome XV.</title>
        <authorList>
            <person name="Dujon B."/>
            <person name="Albermann K."/>
            <person name="Aldea M."/>
            <person name="Alexandraki D."/>
            <person name="Ansorge W."/>
            <person name="Arino J."/>
            <person name="Benes V."/>
            <person name="Bohn C."/>
            <person name="Bolotin-Fukuhara M."/>
            <person name="Bordonne R."/>
            <person name="Boyer J."/>
            <person name="Camasses A."/>
            <person name="Casamayor A."/>
            <person name="Casas C."/>
            <person name="Cheret G."/>
            <person name="Cziepluch C."/>
            <person name="Daignan-Fornier B."/>
            <person name="Dang V.-D."/>
            <person name="de Haan M."/>
            <person name="Delius H."/>
            <person name="Durand P."/>
            <person name="Fairhead C."/>
            <person name="Feldmann H."/>
            <person name="Gaillon L."/>
            <person name="Galisson F."/>
            <person name="Gamo F.-J."/>
            <person name="Gancedo C."/>
            <person name="Goffeau A."/>
            <person name="Goulding S.E."/>
            <person name="Grivell L.A."/>
            <person name="Habbig B."/>
            <person name="Hand N.J."/>
            <person name="Hani J."/>
            <person name="Hattenhorst U."/>
            <person name="Hebling U."/>
            <person name="Hernando Y."/>
            <person name="Herrero E."/>
            <person name="Heumann K."/>
            <person name="Hiesel R."/>
            <person name="Hilger F."/>
            <person name="Hofmann B."/>
            <person name="Hollenberg C.P."/>
            <person name="Hughes B."/>
            <person name="Jauniaux J.-C."/>
            <person name="Kalogeropoulos A."/>
            <person name="Katsoulou C."/>
            <person name="Kordes E."/>
            <person name="Lafuente M.J."/>
            <person name="Landt O."/>
            <person name="Louis E.J."/>
            <person name="Maarse A.C."/>
            <person name="Madania A."/>
            <person name="Mannhaupt G."/>
            <person name="Marck C."/>
            <person name="Martin R.P."/>
            <person name="Mewes H.-W."/>
            <person name="Michaux G."/>
            <person name="Paces V."/>
            <person name="Parle-McDermott A.G."/>
            <person name="Pearson B.M."/>
            <person name="Perrin A."/>
            <person name="Pettersson B."/>
            <person name="Poch O."/>
            <person name="Pohl T.M."/>
            <person name="Poirey R."/>
            <person name="Portetelle D."/>
            <person name="Pujol A."/>
            <person name="Purnelle B."/>
            <person name="Ramezani Rad M."/>
            <person name="Rechmann S."/>
            <person name="Schwager C."/>
            <person name="Schweizer M."/>
            <person name="Sor F."/>
            <person name="Sterky F."/>
            <person name="Tarassov I.A."/>
            <person name="Teodoru C."/>
            <person name="Tettelin H."/>
            <person name="Thierry A."/>
            <person name="Tobiasch E."/>
            <person name="Tzermia M."/>
            <person name="Uhlen M."/>
            <person name="Unseld M."/>
            <person name="Valens M."/>
            <person name="Vandenbol M."/>
            <person name="Vetter I."/>
            <person name="Vlcek C."/>
            <person name="Voet M."/>
            <person name="Volckaert G."/>
            <person name="Voss H."/>
            <person name="Wambutt R."/>
            <person name="Wedler H."/>
            <person name="Wiemann S."/>
            <person name="Winsor B."/>
            <person name="Wolfe K.H."/>
            <person name="Zollner A."/>
            <person name="Zumstein E."/>
            <person name="Kleine K."/>
        </authorList>
    </citation>
    <scope>NUCLEOTIDE SEQUENCE [LARGE SCALE GENOMIC DNA]</scope>
    <source>
        <strain>ATCC 204508 / S288c</strain>
    </source>
</reference>
<reference key="4">
    <citation type="journal article" date="2014" name="G3 (Bethesda)">
        <title>The reference genome sequence of Saccharomyces cerevisiae: Then and now.</title>
        <authorList>
            <person name="Engel S.R."/>
            <person name="Dietrich F.S."/>
            <person name="Fisk D.G."/>
            <person name="Binkley G."/>
            <person name="Balakrishnan R."/>
            <person name="Costanzo M.C."/>
            <person name="Dwight S.S."/>
            <person name="Hitz B.C."/>
            <person name="Karra K."/>
            <person name="Nash R.S."/>
            <person name="Weng S."/>
            <person name="Wong E.D."/>
            <person name="Lloyd P."/>
            <person name="Skrzypek M.S."/>
            <person name="Miyasato S.R."/>
            <person name="Simison M."/>
            <person name="Cherry J.M."/>
        </authorList>
    </citation>
    <scope>GENOME REANNOTATION</scope>
    <source>
        <strain>ATCC 204508 / S288c</strain>
    </source>
</reference>
<reference key="5">
    <citation type="journal article" date="2007" name="Genome Res.">
        <title>Approaching a complete repository of sequence-verified protein-encoding clones for Saccharomyces cerevisiae.</title>
        <authorList>
            <person name="Hu Y."/>
            <person name="Rolfs A."/>
            <person name="Bhullar B."/>
            <person name="Murthy T.V.S."/>
            <person name="Zhu C."/>
            <person name="Berger M.F."/>
            <person name="Camargo A.A."/>
            <person name="Kelley F."/>
            <person name="McCarron S."/>
            <person name="Jepson D."/>
            <person name="Richardson A."/>
            <person name="Raphael J."/>
            <person name="Moreira D."/>
            <person name="Taycher E."/>
            <person name="Zuo D."/>
            <person name="Mohr S."/>
            <person name="Kane M.F."/>
            <person name="Williamson J."/>
            <person name="Simpson A.J.G."/>
            <person name="Bulyk M.L."/>
            <person name="Harlow E."/>
            <person name="Marsischky G."/>
            <person name="Kolodner R.D."/>
            <person name="LaBaer J."/>
        </authorList>
    </citation>
    <scope>NUCLEOTIDE SEQUENCE [GENOMIC DNA]</scope>
    <source>
        <strain>ATCC 204508 / S288c</strain>
    </source>
</reference>
<reference key="6">
    <citation type="journal article" date="1997" name="Proc. Natl. Acad. Sci. U.S.A.">
        <title>Identification of the proteins of the yeast U1 small nuclear ribonucleoprotein complex by mass spectrometry.</title>
        <authorList>
            <person name="Neubauer G."/>
            <person name="Gottschalk A."/>
            <person name="Fabrizio P."/>
            <person name="Seraphin B."/>
            <person name="Luehrmann R."/>
            <person name="Mann M."/>
        </authorList>
    </citation>
    <scope>PARTIAL PROTEIN SEQUENCE</scope>
</reference>
<reference key="7">
    <citation type="journal article" date="1998" name="Mol. Cell. Biol.">
        <title>Interactions within the yeast Sm core complex: from proteins to amino acids.</title>
        <authorList>
            <person name="Camasses A."/>
            <person name="Bragado-Nilsson E."/>
            <person name="Martin R."/>
            <person name="Seraphin B."/>
            <person name="Bordonne R."/>
        </authorList>
    </citation>
    <scope>INTERACTION WITH SMX2 AND SMX3</scope>
</reference>
<reference key="8">
    <citation type="journal article" date="1999" name="EMBO J.">
        <title>Sm and Sm-like proteins assemble in two related complexes of deep evolutionary origin.</title>
        <authorList>
            <person name="Salgado-Garrido J."/>
            <person name="Bragado-Nilsson E."/>
            <person name="Kandels-Lewis S."/>
            <person name="Seraphin B."/>
        </authorList>
    </citation>
    <scope>RNA-BINDING</scope>
</reference>
<reference key="9">
    <citation type="journal article" date="1999" name="EMBO J.">
        <title>Identification by mass spectrometry and functional analysis of novel proteins of the yeast [U4/U6.U5] tri-snRNP.</title>
        <authorList>
            <person name="Gottschalk A."/>
            <person name="Neubauer G."/>
            <person name="Banroques J."/>
            <person name="Mann M."/>
            <person name="Luehrmann R."/>
            <person name="Fabrizio P."/>
        </authorList>
    </citation>
    <scope>SUBUNIT</scope>
    <scope>IDENTIFICATION IN THE U4/U5/U6 TRI-SNRNP COMPLEX</scope>
    <scope>IDENTIFICATION BY MASS SPECTROMETRY</scope>
</reference>
<reference key="10">
    <citation type="journal article" date="2002" name="Mol. Cell">
        <title>Composition and functional characterization of the yeast spliceosomal penta-snRNP.</title>
        <authorList>
            <person name="Stevens S.W."/>
            <person name="Ryan D.E."/>
            <person name="Ge H.Y."/>
            <person name="Moore R.E."/>
            <person name="Young M.K."/>
            <person name="Lee T.D."/>
            <person name="Abelson J."/>
        </authorList>
    </citation>
    <scope>CHARACTERIZATION OF THE SPLICEOSOME</scope>
</reference>
<reference key="11">
    <citation type="journal article" date="2001" name="J. Mol. Biol.">
        <title>Stoichiometry of the Sm proteins in yeast spliceosomal snRNPs supports the heptamer ring model of the core domain.</title>
        <authorList>
            <person name="Walke S."/>
            <person name="Bragado-Nilsson E."/>
            <person name="Seraphin B."/>
            <person name="Nagai K."/>
        </authorList>
    </citation>
    <scope>SUBUNIT</scope>
</reference>
<reference key="12">
    <citation type="journal article" date="2000" name="Mol. Cell. Biol.">
        <title>Functional characterization of nuclear localization signals in yeast Sm proteins.</title>
        <authorList>
            <person name="Bordonne R."/>
        </authorList>
    </citation>
    <scope>SUBCELLULAR LOCATION</scope>
</reference>
<reference key="13">
    <citation type="journal article" date="2003" name="Nature">
        <title>Global analysis of protein expression in yeast.</title>
        <authorList>
            <person name="Ghaemmaghami S."/>
            <person name="Huh W.-K."/>
            <person name="Bower K."/>
            <person name="Howson R.W."/>
            <person name="Belle A."/>
            <person name="Dephoure N."/>
            <person name="O'Shea E.K."/>
            <person name="Weissman J.S."/>
        </authorList>
    </citation>
    <scope>LEVEL OF PROTEIN EXPRESSION [LARGE SCALE ANALYSIS]</scope>
</reference>
<dbReference type="EMBL" id="X92449">
    <property type="protein sequence ID" value="CAA63198.1"/>
    <property type="molecule type" value="Genomic_DNA"/>
</dbReference>
<dbReference type="EMBL" id="U55020">
    <property type="protein sequence ID" value="AAC49645.1"/>
    <property type="molecule type" value="Genomic_DNA"/>
</dbReference>
<dbReference type="EMBL" id="Z75067">
    <property type="protein sequence ID" value="CAA99365.1"/>
    <property type="molecule type" value="Genomic_DNA"/>
</dbReference>
<dbReference type="EMBL" id="AY558029">
    <property type="protein sequence ID" value="AAS56355.1"/>
    <property type="molecule type" value="Genomic_DNA"/>
</dbReference>
<dbReference type="EMBL" id="BK006948">
    <property type="protein sequence ID" value="DAA10932.1"/>
    <property type="molecule type" value="Genomic_DNA"/>
</dbReference>
<dbReference type="PIR" id="S67047">
    <property type="entry name" value="S67047"/>
</dbReference>
<dbReference type="RefSeq" id="NP_014802.3">
    <property type="nucleotide sequence ID" value="NM_001183578.3"/>
</dbReference>
<dbReference type="PDB" id="3JCM">
    <property type="method" value="EM"/>
    <property type="resolution" value="3.80 A"/>
    <property type="chains" value="V/Y=1-94"/>
</dbReference>
<dbReference type="PDB" id="5GAM">
    <property type="method" value="EM"/>
    <property type="resolution" value="3.70 A"/>
    <property type="chains" value="e=1-94"/>
</dbReference>
<dbReference type="PDB" id="5GAN">
    <property type="method" value="EM"/>
    <property type="resolution" value="3.60 A"/>
    <property type="chains" value="e/p=1-94"/>
</dbReference>
<dbReference type="PDB" id="5GAO">
    <property type="method" value="EM"/>
    <property type="resolution" value="3.60 A"/>
    <property type="chains" value="p=1-94"/>
</dbReference>
<dbReference type="PDB" id="5GM6">
    <property type="method" value="EM"/>
    <property type="resolution" value="3.50 A"/>
    <property type="chains" value="i=1-94"/>
</dbReference>
<dbReference type="PDB" id="5GMK">
    <property type="method" value="EM"/>
    <property type="resolution" value="3.40 A"/>
    <property type="chains" value="i/u=1-94"/>
</dbReference>
<dbReference type="PDB" id="5LJ3">
    <property type="method" value="EM"/>
    <property type="resolution" value="3.80 A"/>
    <property type="chains" value="e/p=1-94"/>
</dbReference>
<dbReference type="PDB" id="5LJ5">
    <property type="method" value="EM"/>
    <property type="resolution" value="3.80 A"/>
    <property type="chains" value="e/p=1-94"/>
</dbReference>
<dbReference type="PDB" id="5LQW">
    <property type="method" value="EM"/>
    <property type="resolution" value="5.80 A"/>
    <property type="chains" value="e=1-94"/>
</dbReference>
<dbReference type="PDB" id="5MPS">
    <property type="method" value="EM"/>
    <property type="resolution" value="3.85 A"/>
    <property type="chains" value="e=1-94"/>
</dbReference>
<dbReference type="PDB" id="5MQ0">
    <property type="method" value="EM"/>
    <property type="resolution" value="4.17 A"/>
    <property type="chains" value="e/p=1-94"/>
</dbReference>
<dbReference type="PDB" id="5NRL">
    <property type="method" value="EM"/>
    <property type="resolution" value="7.20 A"/>
    <property type="chains" value="e/p/w=1-94"/>
</dbReference>
<dbReference type="PDB" id="5WSG">
    <property type="method" value="EM"/>
    <property type="resolution" value="4.00 A"/>
    <property type="chains" value="G/i=1-94"/>
</dbReference>
<dbReference type="PDB" id="5Y88">
    <property type="method" value="EM"/>
    <property type="resolution" value="3.70 A"/>
    <property type="chains" value="b/i=1-94"/>
</dbReference>
<dbReference type="PDB" id="5YLZ">
    <property type="method" value="EM"/>
    <property type="resolution" value="3.60 A"/>
    <property type="chains" value="b/i=1-94"/>
</dbReference>
<dbReference type="PDB" id="5ZWM">
    <property type="method" value="EM"/>
    <property type="resolution" value="3.40 A"/>
    <property type="chains" value="T/e/i=1-94"/>
</dbReference>
<dbReference type="PDB" id="5ZWN">
    <property type="method" value="EM"/>
    <property type="resolution" value="3.30 A"/>
    <property type="chains" value="e=1-94"/>
</dbReference>
<dbReference type="PDB" id="5ZWO">
    <property type="method" value="EM"/>
    <property type="resolution" value="3.90 A"/>
    <property type="chains" value="T/e/i=1-94"/>
</dbReference>
<dbReference type="PDB" id="6BK8">
    <property type="method" value="EM"/>
    <property type="resolution" value="3.30 A"/>
    <property type="chains" value="c/l=1-94"/>
</dbReference>
<dbReference type="PDB" id="6EXN">
    <property type="method" value="EM"/>
    <property type="resolution" value="3.70 A"/>
    <property type="chains" value="e/p=1-94"/>
</dbReference>
<dbReference type="PDB" id="6G90">
    <property type="method" value="EM"/>
    <property type="resolution" value="4.00 A"/>
    <property type="chains" value="e/w=1-94"/>
</dbReference>
<dbReference type="PDB" id="6J6G">
    <property type="method" value="EM"/>
    <property type="resolution" value="3.20 A"/>
    <property type="chains" value="i/u=1-94"/>
</dbReference>
<dbReference type="PDB" id="6J6H">
    <property type="method" value="EM"/>
    <property type="resolution" value="3.60 A"/>
    <property type="chains" value="i/u=1-94"/>
</dbReference>
<dbReference type="PDB" id="6J6N">
    <property type="method" value="EM"/>
    <property type="resolution" value="3.86 A"/>
    <property type="chains" value="i/u=1-94"/>
</dbReference>
<dbReference type="PDB" id="6J6Q">
    <property type="method" value="EM"/>
    <property type="resolution" value="3.70 A"/>
    <property type="chains" value="i/u=1-94"/>
</dbReference>
<dbReference type="PDB" id="6N7P">
    <property type="method" value="EM"/>
    <property type="resolution" value="3.60 A"/>
    <property type="chains" value="O=1-94"/>
</dbReference>
<dbReference type="PDB" id="6N7R">
    <property type="method" value="EM"/>
    <property type="resolution" value="3.20 A"/>
    <property type="chains" value="O=1-94"/>
</dbReference>
<dbReference type="PDB" id="6N7X">
    <property type="method" value="EM"/>
    <property type="resolution" value="3.60 A"/>
    <property type="chains" value="O=1-94"/>
</dbReference>
<dbReference type="PDB" id="7B9V">
    <property type="method" value="EM"/>
    <property type="resolution" value="2.80 A"/>
    <property type="chains" value="e/p=1-94"/>
</dbReference>
<dbReference type="PDB" id="7OQB">
    <property type="method" value="EM"/>
    <property type="resolution" value="9.00 A"/>
    <property type="chains" value="w=1-93"/>
</dbReference>
<dbReference type="PDB" id="7OQC">
    <property type="method" value="EM"/>
    <property type="resolution" value="4.10 A"/>
    <property type="chains" value="e=1-94"/>
</dbReference>
<dbReference type="PDB" id="7OQE">
    <property type="method" value="EM"/>
    <property type="resolution" value="5.90 A"/>
    <property type="chains" value="e/w=1-94"/>
</dbReference>
<dbReference type="PDB" id="8W2O">
    <property type="method" value="EM"/>
    <property type="resolution" value="3.49 A"/>
    <property type="chains" value="O=1-94"/>
</dbReference>
<dbReference type="PDB" id="9DTR">
    <property type="method" value="EM"/>
    <property type="resolution" value="2.31 A"/>
    <property type="chains" value="e/p=1-94"/>
</dbReference>
<dbReference type="PDBsum" id="3JCM"/>
<dbReference type="PDBsum" id="5GAM"/>
<dbReference type="PDBsum" id="5GAN"/>
<dbReference type="PDBsum" id="5GAO"/>
<dbReference type="PDBsum" id="5GM6"/>
<dbReference type="PDBsum" id="5GMK"/>
<dbReference type="PDBsum" id="5LJ3"/>
<dbReference type="PDBsum" id="5LJ5"/>
<dbReference type="PDBsum" id="5LQW"/>
<dbReference type="PDBsum" id="5MPS"/>
<dbReference type="PDBsum" id="5MQ0"/>
<dbReference type="PDBsum" id="5NRL"/>
<dbReference type="PDBsum" id="5WSG"/>
<dbReference type="PDBsum" id="5Y88"/>
<dbReference type="PDBsum" id="5YLZ"/>
<dbReference type="PDBsum" id="5ZWM"/>
<dbReference type="PDBsum" id="5ZWN"/>
<dbReference type="PDBsum" id="5ZWO"/>
<dbReference type="PDBsum" id="6BK8"/>
<dbReference type="PDBsum" id="6EXN"/>
<dbReference type="PDBsum" id="6G90"/>
<dbReference type="PDBsum" id="6J6G"/>
<dbReference type="PDBsum" id="6J6H"/>
<dbReference type="PDBsum" id="6J6N"/>
<dbReference type="PDBsum" id="6J6Q"/>
<dbReference type="PDBsum" id="6N7P"/>
<dbReference type="PDBsum" id="6N7R"/>
<dbReference type="PDBsum" id="6N7X"/>
<dbReference type="PDBsum" id="7B9V"/>
<dbReference type="PDBsum" id="7OQB"/>
<dbReference type="PDBsum" id="7OQC"/>
<dbReference type="PDBsum" id="7OQE"/>
<dbReference type="PDBsum" id="8W2O"/>
<dbReference type="PDBsum" id="9DTR"/>
<dbReference type="EMDB" id="EMD-0360"/>
<dbReference type="EMDB" id="EMD-0361"/>
<dbReference type="EMDB" id="EMD-0686"/>
<dbReference type="EMDB" id="EMD-0687"/>
<dbReference type="EMDB" id="EMD-0691"/>
<dbReference type="EMDB" id="EMD-0692"/>
<dbReference type="EMDB" id="EMD-12106"/>
<dbReference type="EMDB" id="EMD-13028"/>
<dbReference type="EMDB" id="EMD-13029"/>
<dbReference type="EMDB" id="EMD-13033"/>
<dbReference type="EMDB" id="EMD-3539"/>
<dbReference type="EMDB" id="EMD-3541"/>
<dbReference type="EMDB" id="EMD-3683"/>
<dbReference type="EMDB" id="EMD-3979"/>
<dbReference type="EMDB" id="EMD-4055"/>
<dbReference type="EMDB" id="EMD-4057"/>
<dbReference type="EMDB" id="EMD-4364"/>
<dbReference type="EMDB" id="EMD-43753"/>
<dbReference type="EMDB" id="EMD-47157"/>
<dbReference type="EMDB" id="EMD-6817"/>
<dbReference type="EMDB" id="EMD-6839"/>
<dbReference type="EMDB" id="EMD-6972"/>
<dbReference type="EMDB" id="EMD-6973"/>
<dbReference type="EMDB" id="EMD-6974"/>
<dbReference type="EMDB" id="EMD-7109"/>
<dbReference type="EMDB" id="EMD-8011"/>
<dbReference type="EMDB" id="EMD-8012"/>
<dbReference type="EMDB" id="EMD-8013"/>
<dbReference type="EMDB" id="EMD-8622"/>
<dbReference type="EMDB" id="EMD-9524"/>
<dbReference type="EMDB" id="EMD-9525"/>
<dbReference type="SMR" id="Q12330"/>
<dbReference type="BioGRID" id="34555">
    <property type="interactions" value="163"/>
</dbReference>
<dbReference type="ComplexPortal" id="CPX-23">
    <property type="entry name" value="U1 small nuclear ribonucleoprotein complex"/>
</dbReference>
<dbReference type="ComplexPortal" id="CPX-25">
    <property type="entry name" value="U4/U6.U5 tri-small nuclear ribonucleoprotein complex"/>
</dbReference>
<dbReference type="ComplexPortal" id="CPX-26">
    <property type="entry name" value="U2 small nuclear ribonucleoprotein complex"/>
</dbReference>
<dbReference type="ComplexPortal" id="CPX-29">
    <property type="entry name" value="U5 small nuclear ribonucleoprotein complex"/>
</dbReference>
<dbReference type="ComplexPortal" id="CPX-30">
    <property type="entry name" value="U5 small nuclear ribonucleoprotein complex, AAR2 variant"/>
</dbReference>
<dbReference type="ComplexPortal" id="CPX-31">
    <property type="entry name" value="U4 small nuclear ribonucleoprotein complex"/>
</dbReference>
<dbReference type="ComplexPortal" id="CPX-32">
    <property type="entry name" value="U4/U6 small nuclear ribonucleoprotein complex"/>
</dbReference>
<dbReference type="ComplexPortal" id="CPX-43">
    <property type="entry name" value="Sm complex"/>
</dbReference>
<dbReference type="DIP" id="DIP-1633N"/>
<dbReference type="FunCoup" id="Q12330">
    <property type="interactions" value="1113"/>
</dbReference>
<dbReference type="IntAct" id="Q12330">
    <property type="interactions" value="29"/>
</dbReference>
<dbReference type="MINT" id="Q12330"/>
<dbReference type="STRING" id="4932.YOR159C"/>
<dbReference type="iPTMnet" id="Q12330"/>
<dbReference type="PaxDb" id="4932-YOR159C"/>
<dbReference type="PeptideAtlas" id="Q12330"/>
<dbReference type="EnsemblFungi" id="YOR159C_mRNA">
    <property type="protein sequence ID" value="YOR159C"/>
    <property type="gene ID" value="YOR159C"/>
</dbReference>
<dbReference type="GeneID" id="854330"/>
<dbReference type="KEGG" id="sce:YOR159C"/>
<dbReference type="AGR" id="SGD:S000005685"/>
<dbReference type="SGD" id="S000005685">
    <property type="gene designation" value="SME1"/>
</dbReference>
<dbReference type="VEuPathDB" id="FungiDB:YOR159C"/>
<dbReference type="eggNOG" id="KOG1774">
    <property type="taxonomic scope" value="Eukaryota"/>
</dbReference>
<dbReference type="GeneTree" id="ENSGT00390000012818"/>
<dbReference type="HOGENOM" id="CLU_125186_1_0_1"/>
<dbReference type="InParanoid" id="Q12330"/>
<dbReference type="OMA" id="VPPINCI"/>
<dbReference type="OrthoDB" id="25620at2759"/>
<dbReference type="BioCyc" id="YEAST:G3O-33676-MONOMER"/>
<dbReference type="BioGRID-ORCS" id="854330">
    <property type="hits" value="4 hits in 10 CRISPR screens"/>
</dbReference>
<dbReference type="EvolutionaryTrace" id="Q12330"/>
<dbReference type="PRO" id="PR:Q12330"/>
<dbReference type="Proteomes" id="UP000002311">
    <property type="component" value="Chromosome XV"/>
</dbReference>
<dbReference type="RNAct" id="Q12330">
    <property type="molecule type" value="protein"/>
</dbReference>
<dbReference type="GO" id="GO:0000243">
    <property type="term" value="C:commitment complex"/>
    <property type="evidence" value="ECO:0000303"/>
    <property type="project" value="ComplexPortal"/>
</dbReference>
<dbReference type="GO" id="GO:0005737">
    <property type="term" value="C:cytoplasm"/>
    <property type="evidence" value="ECO:0000303"/>
    <property type="project" value="ComplexPortal"/>
</dbReference>
<dbReference type="GO" id="GO:0005634">
    <property type="term" value="C:nucleus"/>
    <property type="evidence" value="ECO:0000303"/>
    <property type="project" value="ComplexPortal"/>
</dbReference>
<dbReference type="GO" id="GO:0034715">
    <property type="term" value="C:pICln-Sm protein complex"/>
    <property type="evidence" value="ECO:0000318"/>
    <property type="project" value="GO_Central"/>
</dbReference>
<dbReference type="GO" id="GO:0071011">
    <property type="term" value="C:precatalytic spliceosome"/>
    <property type="evidence" value="ECO:0000318"/>
    <property type="project" value="GO_Central"/>
</dbReference>
<dbReference type="GO" id="GO:0005681">
    <property type="term" value="C:spliceosomal complex"/>
    <property type="evidence" value="ECO:0000303"/>
    <property type="project" value="ComplexPortal"/>
</dbReference>
<dbReference type="GO" id="GO:0005685">
    <property type="term" value="C:U1 snRNP"/>
    <property type="evidence" value="ECO:0000314"/>
    <property type="project" value="SGD"/>
</dbReference>
<dbReference type="GO" id="GO:0005686">
    <property type="term" value="C:U2 snRNP"/>
    <property type="evidence" value="ECO:0000318"/>
    <property type="project" value="GO_Central"/>
</dbReference>
<dbReference type="GO" id="GO:0071004">
    <property type="term" value="C:U2-type prespliceosome"/>
    <property type="evidence" value="ECO:0000314"/>
    <property type="project" value="SGD"/>
</dbReference>
<dbReference type="GO" id="GO:0005687">
    <property type="term" value="C:U4 snRNP"/>
    <property type="evidence" value="ECO:0000353"/>
    <property type="project" value="ComplexPortal"/>
</dbReference>
<dbReference type="GO" id="GO:0071001">
    <property type="term" value="C:U4/U6 snRNP"/>
    <property type="evidence" value="ECO:0000303"/>
    <property type="project" value="ComplexPortal"/>
</dbReference>
<dbReference type="GO" id="GO:0046540">
    <property type="term" value="C:U4/U6 x U5 tri-snRNP complex"/>
    <property type="evidence" value="ECO:0000314"/>
    <property type="project" value="SGD"/>
</dbReference>
<dbReference type="GO" id="GO:0005682">
    <property type="term" value="C:U5 snRNP"/>
    <property type="evidence" value="ECO:0000314"/>
    <property type="project" value="SGD"/>
</dbReference>
<dbReference type="GO" id="GO:0003723">
    <property type="term" value="F:RNA binding"/>
    <property type="evidence" value="ECO:0007669"/>
    <property type="project" value="UniProtKB-KW"/>
</dbReference>
<dbReference type="GO" id="GO:1990935">
    <property type="term" value="F:splicing factor binding"/>
    <property type="evidence" value="ECO:0000353"/>
    <property type="project" value="SGD"/>
</dbReference>
<dbReference type="GO" id="GO:0036261">
    <property type="term" value="P:7-methylguanosine cap hypermethylation"/>
    <property type="evidence" value="ECO:0000315"/>
    <property type="project" value="ComplexPortal"/>
</dbReference>
<dbReference type="GO" id="GO:0000395">
    <property type="term" value="P:mRNA 5'-splice site recognition"/>
    <property type="evidence" value="ECO:0000303"/>
    <property type="project" value="ComplexPortal"/>
</dbReference>
<dbReference type="GO" id="GO:0000398">
    <property type="term" value="P:mRNA splicing, via spliceosome"/>
    <property type="evidence" value="ECO:0000315"/>
    <property type="project" value="SGD"/>
</dbReference>
<dbReference type="GO" id="GO:0000245">
    <property type="term" value="P:spliceosomal complex assembly"/>
    <property type="evidence" value="ECO:0000303"/>
    <property type="project" value="ComplexPortal"/>
</dbReference>
<dbReference type="GO" id="GO:0000387">
    <property type="term" value="P:spliceosomal snRNP assembly"/>
    <property type="evidence" value="ECO:0000318"/>
    <property type="project" value="GO_Central"/>
</dbReference>
<dbReference type="GO" id="GO:1903241">
    <property type="term" value="P:U2-type prespliceosome assembly"/>
    <property type="evidence" value="ECO:0000303"/>
    <property type="project" value="ComplexPortal"/>
</dbReference>
<dbReference type="CDD" id="cd01718">
    <property type="entry name" value="Sm_E"/>
    <property type="match status" value="1"/>
</dbReference>
<dbReference type="FunFam" id="2.30.30.100:FF:000092">
    <property type="entry name" value="Small nuclear ribonucleoprotein E"/>
    <property type="match status" value="1"/>
</dbReference>
<dbReference type="Gene3D" id="2.30.30.100">
    <property type="match status" value="1"/>
</dbReference>
<dbReference type="InterPro" id="IPR010920">
    <property type="entry name" value="LSM_dom_sf"/>
</dbReference>
<dbReference type="InterPro" id="IPR047575">
    <property type="entry name" value="Sm"/>
</dbReference>
<dbReference type="InterPro" id="IPR001163">
    <property type="entry name" value="Sm_dom_euk/arc"/>
</dbReference>
<dbReference type="InterPro" id="IPR027078">
    <property type="entry name" value="snRNP-E"/>
</dbReference>
<dbReference type="PANTHER" id="PTHR11193">
    <property type="entry name" value="SMALL NUCLEAR RIBONUCLEOPROTEIN E"/>
    <property type="match status" value="1"/>
</dbReference>
<dbReference type="Pfam" id="PF01423">
    <property type="entry name" value="LSM"/>
    <property type="match status" value="1"/>
</dbReference>
<dbReference type="SMART" id="SM00651">
    <property type="entry name" value="Sm"/>
    <property type="match status" value="1"/>
</dbReference>
<dbReference type="SUPFAM" id="SSF50182">
    <property type="entry name" value="Sm-like ribonucleoproteins"/>
    <property type="match status" value="1"/>
</dbReference>
<dbReference type="PROSITE" id="PS52002">
    <property type="entry name" value="SM"/>
    <property type="match status" value="1"/>
</dbReference>
<organism>
    <name type="scientific">Saccharomyces cerevisiae (strain ATCC 204508 / S288c)</name>
    <name type="common">Baker's yeast</name>
    <dbReference type="NCBI Taxonomy" id="559292"/>
    <lineage>
        <taxon>Eukaryota</taxon>
        <taxon>Fungi</taxon>
        <taxon>Dikarya</taxon>
        <taxon>Ascomycota</taxon>
        <taxon>Saccharomycotina</taxon>
        <taxon>Saccharomycetes</taxon>
        <taxon>Saccharomycetales</taxon>
        <taxon>Saccharomycetaceae</taxon>
        <taxon>Saccharomyces</taxon>
    </lineage>
</organism>
<feature type="chain" id="PRO_0000125535" description="Small nuclear ribonucleoprotein E">
    <location>
        <begin position="1"/>
        <end position="94"/>
    </location>
</feature>
<feature type="domain" description="Sm" evidence="1">
    <location>
        <begin position="14"/>
        <end position="94"/>
    </location>
</feature>
<feature type="helix" evidence="10">
    <location>
        <begin position="13"/>
        <end position="23"/>
    </location>
</feature>
<feature type="strand" evidence="10">
    <location>
        <begin position="26"/>
        <end position="33"/>
    </location>
</feature>
<feature type="strand" evidence="10">
    <location>
        <begin position="37"/>
        <end position="46"/>
    </location>
</feature>
<feature type="strand" evidence="9">
    <location>
        <begin position="48"/>
        <end position="50"/>
    </location>
</feature>
<feature type="strand" evidence="10">
    <location>
        <begin position="52"/>
        <end position="62"/>
    </location>
</feature>
<feature type="turn" evidence="10">
    <location>
        <begin position="64"/>
        <end position="66"/>
    </location>
</feature>
<feature type="helix" evidence="10">
    <location>
        <begin position="71"/>
        <end position="73"/>
    </location>
</feature>
<feature type="strand" evidence="10">
    <location>
        <begin position="75"/>
        <end position="82"/>
    </location>
</feature>
<feature type="helix" evidence="10">
    <location>
        <begin position="84"/>
        <end position="86"/>
    </location>
</feature>
<feature type="strand" evidence="10">
    <location>
        <begin position="87"/>
        <end position="92"/>
    </location>
</feature>
<sequence length="94" mass="10375">MSNKVKTKAMVPPINCIFNFLQQQTPVTIWLFEQIGIRIKGKIVGFDEFMNVVIDEAVEIPVNSADGKEDVEKGTPLGKILLKGDNITLITSAD</sequence>
<protein>
    <recommendedName>
        <fullName>Small nuclear ribonucleoprotein E</fullName>
        <shortName>snRNP-E</shortName>
    </recommendedName>
    <alternativeName>
        <fullName>Sm protein E</fullName>
        <shortName>Sm-E</shortName>
        <shortName>SmE</shortName>
    </alternativeName>
</protein>
<name>RUXE_YEAST</name>
<proteinExistence type="evidence at protein level"/>
<accession>Q12330</accession>
<accession>D6W2L6</accession>
<comment type="function">
    <text evidence="6">Involved in pre-mRNA splicing. Binds and is required for the stability of snRNA U1, U2, U4 and U5 which contain a highly conserved structural motif called the Sm binding site. Involved in cap modification.</text>
</comment>
<comment type="subunit">
    <text evidence="2 4 7">Component of the Sm core complex, present in spliceosomal snRNP U1, U2, U4/U6 and U5. The core complex contains SMB1, SMD1, SMD2, SMD3, SME1, SMX3 and SMX2 (Sm proteins B, D1, D2, D3, E, F and G, respectively), and is probably a heptameric ring structure. SME1 specifically interacts with SMX2 and SMX3. Component of the U4/U6-U5 tri-snRNP complex composed of the U4, U6 and U5 snRNAs and at least PRP3, PRP4, PRP6, PRP8, PRP18, PRP31, PRP38, SNU13, SNU23, SNU66, SNU114, SPP381, SMB1, SMD1, SMD2, SMD3, SMX2, SMX3, LSM2, LSM3, LSM4, LSM5, LSM6, LSM7, LSM8, BRR2 and DIB1.</text>
</comment>
<comment type="interaction">
    <interactant intactId="EBI-16359">
        <id>Q12330</id>
    </interactant>
    <interactant intactId="EBI-637">
        <id>P40204</id>
        <label>SMX2</label>
    </interactant>
    <organismsDiffer>false</organismsDiffer>
    <experiments>6</experiments>
</comment>
<comment type="interaction">
    <interactant intactId="EBI-16359">
        <id>Q12330</id>
    </interactant>
    <interactant intactId="EBI-770">
        <id>P54999</id>
        <label>SMX3</label>
    </interactant>
    <organismsDiffer>false</organismsDiffer>
    <experiments>7</experiments>
</comment>
<comment type="subcellular location">
    <subcellularLocation>
        <location evidence="3">Cytoplasm</location>
    </subcellularLocation>
    <subcellularLocation>
        <location evidence="3">Nucleus</location>
    </subcellularLocation>
</comment>
<comment type="miscellaneous">
    <text evidence="5">Present with 556 molecules/cell in log phase SD medium.</text>
</comment>
<comment type="similarity">
    <text evidence="8">Belongs to the snRNP Sm proteins family.</text>
</comment>
<keyword id="KW-0002">3D-structure</keyword>
<keyword id="KW-0963">Cytoplasm</keyword>
<keyword id="KW-0903">Direct protein sequencing</keyword>
<keyword id="KW-0507">mRNA processing</keyword>
<keyword id="KW-0508">mRNA splicing</keyword>
<keyword id="KW-0539">Nucleus</keyword>
<keyword id="KW-1185">Reference proteome</keyword>
<keyword id="KW-0687">Ribonucleoprotein</keyword>
<keyword id="KW-0694">RNA-binding</keyword>
<keyword id="KW-0747">Spliceosome</keyword>
<gene>
    <name type="primary">SME1</name>
    <name type="ordered locus">YOR159C</name>
</gene>
<evidence type="ECO:0000255" key="1">
    <source>
        <dbReference type="PROSITE-ProRule" id="PRU01346"/>
    </source>
</evidence>
<evidence type="ECO:0000269" key="2">
    <source>
    </source>
</evidence>
<evidence type="ECO:0000269" key="3">
    <source>
    </source>
</evidence>
<evidence type="ECO:0000269" key="4">
    <source>
    </source>
</evidence>
<evidence type="ECO:0000269" key="5">
    <source>
    </source>
</evidence>
<evidence type="ECO:0000269" key="6">
    <source>
    </source>
</evidence>
<evidence type="ECO:0000269" key="7">
    <source>
    </source>
</evidence>
<evidence type="ECO:0000305" key="8"/>
<evidence type="ECO:0007829" key="9">
    <source>
        <dbReference type="PDB" id="6BK8"/>
    </source>
</evidence>
<evidence type="ECO:0007829" key="10">
    <source>
        <dbReference type="PDB" id="9DTR"/>
    </source>
</evidence>